<gene>
    <name type="primary">yodP</name>
    <name type="synonym">yokR</name>
    <name type="ordered locus">BSU19700</name>
</gene>
<protein>
    <recommendedName>
        <fullName evidence="5">N-acetyltransferase YodP</fullName>
        <ecNumber evidence="6">2.3.1.-</ecNumber>
    </recommendedName>
    <alternativeName>
        <fullName evidence="5">Beta-lysine N(6)-acetyltransferase</fullName>
        <ecNumber evidence="4">2.3.1.264</ecNumber>
    </alternativeName>
</protein>
<accession>O34895</accession>
<accession>Q796B4</accession>
<keyword id="KW-0012">Acyltransferase</keyword>
<keyword id="KW-1185">Reference proteome</keyword>
<keyword id="KW-0808">Transferase</keyword>
<name>YODP_BACSU</name>
<proteinExistence type="evidence at protein level"/>
<comment type="function">
    <text evidence="4">In vitro, is able to catalyze the acetylation of beta-lysine to N6-acetyl-beta-lysine, an archaeal osmolyte produced by methanogenic archaea. Its physiological function has not yet been elucidated.</text>
</comment>
<comment type="catalytic activity">
    <reaction evidence="4">
        <text>(3S)-3,6-diaminohexanoate + acetyl-CoA = (3S)-6-acetamido-3-aminohexanoate + CoA + H(+)</text>
        <dbReference type="Rhea" id="RHEA:33019"/>
        <dbReference type="ChEBI" id="CHEBI:15378"/>
        <dbReference type="ChEBI" id="CHEBI:57287"/>
        <dbReference type="ChEBI" id="CHEBI:57288"/>
        <dbReference type="ChEBI" id="CHEBI:57434"/>
        <dbReference type="ChEBI" id="CHEBI:137165"/>
        <dbReference type="EC" id="2.3.1.264"/>
    </reaction>
</comment>
<comment type="induction">
    <text evidence="2 3">Up-regulated during sporulation, under the control of the sigma-E transcription factor (SigE).</text>
</comment>
<comment type="disruption phenotype">
    <text evidence="4">Deletion of the genomic region encompassing the entire yodT-yodS-yodR-yodQ-yodP-kamA gene cluster has no noticeable effect on growth either in rich or minimal medium, does not affect sporulation, and does not cause osmotic sensitivity or influence the compatible solute pool of this soil bacterium.</text>
</comment>
<comment type="biotechnology">
    <text evidence="4">The use of YodP from B.subtilis for N6-acetyl-beta-lysine synthesis opens the bottleneck for the large-scale production of N6-acetyl-beta-lysine to investigate its properties as a compatible solute.</text>
</comment>
<comment type="miscellaneous">
    <text evidence="6">N6-acetyl-beta-lysine is not synthesized by B.subtilis as part of its cellular defense against high salinity.</text>
</comment>
<comment type="similarity">
    <text evidence="5">Belongs to the acetyltransferase family.</text>
</comment>
<dbReference type="EC" id="2.3.1.-" evidence="6"/>
<dbReference type="EC" id="2.3.1.264" evidence="4"/>
<dbReference type="EMBL" id="AF006665">
    <property type="protein sequence ID" value="AAB81158.1"/>
    <property type="molecule type" value="Genomic_DNA"/>
</dbReference>
<dbReference type="EMBL" id="AF015775">
    <property type="protein sequence ID" value="AAB72070.1"/>
    <property type="molecule type" value="Genomic_DNA"/>
</dbReference>
<dbReference type="EMBL" id="AL009126">
    <property type="protein sequence ID" value="CAB13861.1"/>
    <property type="molecule type" value="Genomic_DNA"/>
</dbReference>
<dbReference type="PIR" id="C69904">
    <property type="entry name" value="C69904"/>
</dbReference>
<dbReference type="FunCoup" id="O34895">
    <property type="interactions" value="26"/>
</dbReference>
<dbReference type="STRING" id="224308.BSU19700"/>
<dbReference type="PaxDb" id="224308-BSU19700"/>
<dbReference type="EnsemblBacteria" id="CAB13861">
    <property type="protein sequence ID" value="CAB13861"/>
    <property type="gene ID" value="BSU_19700"/>
</dbReference>
<dbReference type="GeneID" id="940057"/>
<dbReference type="KEGG" id="bsu:BSU19700"/>
<dbReference type="PATRIC" id="fig|224308.179.peg.2157"/>
<dbReference type="eggNOG" id="COG0456">
    <property type="taxonomic scope" value="Bacteria"/>
</dbReference>
<dbReference type="InParanoid" id="O34895"/>
<dbReference type="OrthoDB" id="9790652at2"/>
<dbReference type="BioCyc" id="BSUB:BSU19700-MONOMER"/>
<dbReference type="Proteomes" id="UP000001570">
    <property type="component" value="Chromosome"/>
</dbReference>
<dbReference type="GO" id="GO:0008080">
    <property type="term" value="F:N-acetyltransferase activity"/>
    <property type="evidence" value="ECO:0007669"/>
    <property type="project" value="InterPro"/>
</dbReference>
<dbReference type="CDD" id="cd04301">
    <property type="entry name" value="NAT_SF"/>
    <property type="match status" value="1"/>
</dbReference>
<dbReference type="Gene3D" id="3.40.630.30">
    <property type="match status" value="1"/>
</dbReference>
<dbReference type="InterPro" id="IPR016181">
    <property type="entry name" value="Acyl_CoA_acyltransferase"/>
</dbReference>
<dbReference type="InterPro" id="IPR022525">
    <property type="entry name" value="GNAT_AblB"/>
</dbReference>
<dbReference type="InterPro" id="IPR000182">
    <property type="entry name" value="GNAT_dom"/>
</dbReference>
<dbReference type="NCBIfam" id="TIGR03827">
    <property type="entry name" value="GNAT_ablB"/>
    <property type="match status" value="1"/>
</dbReference>
<dbReference type="Pfam" id="PF00583">
    <property type="entry name" value="Acetyltransf_1"/>
    <property type="match status" value="1"/>
</dbReference>
<dbReference type="SUPFAM" id="SSF55729">
    <property type="entry name" value="Acyl-CoA N-acyltransferases (Nat)"/>
    <property type="match status" value="1"/>
</dbReference>
<dbReference type="PROSITE" id="PS51186">
    <property type="entry name" value="GNAT"/>
    <property type="match status" value="1"/>
</dbReference>
<feature type="chain" id="PRO_0000360500" description="N-acetyltransferase YodP">
    <location>
        <begin position="1"/>
        <end position="275"/>
    </location>
</feature>
<feature type="domain" description="N-acetyltransferase" evidence="1">
    <location>
        <begin position="125"/>
        <end position="271"/>
    </location>
</feature>
<sequence>MLKSIKSSGVTAVLDHDGFNKRIRVVRYDGAIEKALPDIVAAAKEENAEKIIVYAKQHDEPILAKQLFAPEGYLKGYYLGHSACVMVRYLSESRRQTDSYTEEQEIIEAIYRTAPRLRNDSTPVFTMRKAETNDMYQLSMLYKKVFRTYPTPVFDPAYIEKTMNANTVYYIMLDHDRLISAASAEINPELGHAEITDCAVLPEYRGHSLTSFLIEALEKEMAGEDIVHVFSLARASSFGMNAVLYHSGYQYGGRLINNCFIAEGLENMNIWCKQL</sequence>
<reference key="1">
    <citation type="journal article" date="1998" name="DNA Res.">
        <title>Sequence analysis of the Bacillus subtilis 168 chromosome region between the sspC and odhA loci (184 degrees-180 degrees).</title>
        <authorList>
            <person name="Ghim S.-Y."/>
            <person name="Choi S.-K."/>
            <person name="Shin B.-S."/>
            <person name="Jeong Y.-M."/>
            <person name="Sorokin A."/>
            <person name="Ehrlich S.D."/>
            <person name="Park S.-H."/>
        </authorList>
    </citation>
    <scope>NUCLEOTIDE SEQUENCE [GENOMIC DNA]</scope>
    <source>
        <strain>168</strain>
    </source>
</reference>
<reference key="2">
    <citation type="journal article" date="1997" name="Nature">
        <title>The complete genome sequence of the Gram-positive bacterium Bacillus subtilis.</title>
        <authorList>
            <person name="Kunst F."/>
            <person name="Ogasawara N."/>
            <person name="Moszer I."/>
            <person name="Albertini A.M."/>
            <person name="Alloni G."/>
            <person name="Azevedo V."/>
            <person name="Bertero M.G."/>
            <person name="Bessieres P."/>
            <person name="Bolotin A."/>
            <person name="Borchert S."/>
            <person name="Borriss R."/>
            <person name="Boursier L."/>
            <person name="Brans A."/>
            <person name="Braun M."/>
            <person name="Brignell S.C."/>
            <person name="Bron S."/>
            <person name="Brouillet S."/>
            <person name="Bruschi C.V."/>
            <person name="Caldwell B."/>
            <person name="Capuano V."/>
            <person name="Carter N.M."/>
            <person name="Choi S.-K."/>
            <person name="Codani J.-J."/>
            <person name="Connerton I.F."/>
            <person name="Cummings N.J."/>
            <person name="Daniel R.A."/>
            <person name="Denizot F."/>
            <person name="Devine K.M."/>
            <person name="Duesterhoeft A."/>
            <person name="Ehrlich S.D."/>
            <person name="Emmerson P.T."/>
            <person name="Entian K.-D."/>
            <person name="Errington J."/>
            <person name="Fabret C."/>
            <person name="Ferrari E."/>
            <person name="Foulger D."/>
            <person name="Fritz C."/>
            <person name="Fujita M."/>
            <person name="Fujita Y."/>
            <person name="Fuma S."/>
            <person name="Galizzi A."/>
            <person name="Galleron N."/>
            <person name="Ghim S.-Y."/>
            <person name="Glaser P."/>
            <person name="Goffeau A."/>
            <person name="Golightly E.J."/>
            <person name="Grandi G."/>
            <person name="Guiseppi G."/>
            <person name="Guy B.J."/>
            <person name="Haga K."/>
            <person name="Haiech J."/>
            <person name="Harwood C.R."/>
            <person name="Henaut A."/>
            <person name="Hilbert H."/>
            <person name="Holsappel S."/>
            <person name="Hosono S."/>
            <person name="Hullo M.-F."/>
            <person name="Itaya M."/>
            <person name="Jones L.-M."/>
            <person name="Joris B."/>
            <person name="Karamata D."/>
            <person name="Kasahara Y."/>
            <person name="Klaerr-Blanchard M."/>
            <person name="Klein C."/>
            <person name="Kobayashi Y."/>
            <person name="Koetter P."/>
            <person name="Koningstein G."/>
            <person name="Krogh S."/>
            <person name="Kumano M."/>
            <person name="Kurita K."/>
            <person name="Lapidus A."/>
            <person name="Lardinois S."/>
            <person name="Lauber J."/>
            <person name="Lazarevic V."/>
            <person name="Lee S.-M."/>
            <person name="Levine A."/>
            <person name="Liu H."/>
            <person name="Masuda S."/>
            <person name="Mauel C."/>
            <person name="Medigue C."/>
            <person name="Medina N."/>
            <person name="Mellado R.P."/>
            <person name="Mizuno M."/>
            <person name="Moestl D."/>
            <person name="Nakai S."/>
            <person name="Noback M."/>
            <person name="Noone D."/>
            <person name="O'Reilly M."/>
            <person name="Ogawa K."/>
            <person name="Ogiwara A."/>
            <person name="Oudega B."/>
            <person name="Park S.-H."/>
            <person name="Parro V."/>
            <person name="Pohl T.M."/>
            <person name="Portetelle D."/>
            <person name="Porwollik S."/>
            <person name="Prescott A.M."/>
            <person name="Presecan E."/>
            <person name="Pujic P."/>
            <person name="Purnelle B."/>
            <person name="Rapoport G."/>
            <person name="Rey M."/>
            <person name="Reynolds S."/>
            <person name="Rieger M."/>
            <person name="Rivolta C."/>
            <person name="Rocha E."/>
            <person name="Roche B."/>
            <person name="Rose M."/>
            <person name="Sadaie Y."/>
            <person name="Sato T."/>
            <person name="Scanlan E."/>
            <person name="Schleich S."/>
            <person name="Schroeter R."/>
            <person name="Scoffone F."/>
            <person name="Sekiguchi J."/>
            <person name="Sekowska A."/>
            <person name="Seror S.J."/>
            <person name="Serror P."/>
            <person name="Shin B.-S."/>
            <person name="Soldo B."/>
            <person name="Sorokin A."/>
            <person name="Tacconi E."/>
            <person name="Takagi T."/>
            <person name="Takahashi H."/>
            <person name="Takemaru K."/>
            <person name="Takeuchi M."/>
            <person name="Tamakoshi A."/>
            <person name="Tanaka T."/>
            <person name="Terpstra P."/>
            <person name="Tognoni A."/>
            <person name="Tosato V."/>
            <person name="Uchiyama S."/>
            <person name="Vandenbol M."/>
            <person name="Vannier F."/>
            <person name="Vassarotti A."/>
            <person name="Viari A."/>
            <person name="Wambutt R."/>
            <person name="Wedler E."/>
            <person name="Wedler H."/>
            <person name="Weitzenegger T."/>
            <person name="Winters P."/>
            <person name="Wipat A."/>
            <person name="Yamamoto H."/>
            <person name="Yamane K."/>
            <person name="Yasumoto K."/>
            <person name="Yata K."/>
            <person name="Yoshida K."/>
            <person name="Yoshikawa H.-F."/>
            <person name="Zumstein E."/>
            <person name="Yoshikawa H."/>
            <person name="Danchin A."/>
        </authorList>
    </citation>
    <scope>NUCLEOTIDE SEQUENCE [LARGE SCALE GENOMIC DNA]</scope>
    <source>
        <strain>168</strain>
    </source>
</reference>
<reference key="3">
    <citation type="journal article" date="2000" name="Proc. Natl. Acad. Sci. U.S.A.">
        <title>The transcriptional profile of early to middle sporulation in Bacillus subtilis.</title>
        <authorList>
            <person name="Fawcett P."/>
            <person name="Eichenberger P."/>
            <person name="Losick R."/>
            <person name="Youngman P."/>
        </authorList>
    </citation>
    <scope>INDUCTION</scope>
</reference>
<reference key="4">
    <citation type="journal article" date="2003" name="Microbiology">
        <title>Identification of sporulation genes by genome-wide analysis of the sigmaE regulon of Bacillus subtilis.</title>
        <authorList>
            <person name="Feucht A."/>
            <person name="Evans L."/>
            <person name="Errington J."/>
        </authorList>
    </citation>
    <scope>INDUCTION</scope>
</reference>
<reference key="5">
    <citation type="journal article" date="2011" name="Appl. Microbiol. Biotechnol.">
        <title>Bacterial abl-like genes: production of the archaeal osmolyte N(epsilon)-acetyl-beta-lysine by homologous overexpression of the yodP-kamA genes in Bacillus subtilis.</title>
        <authorList>
            <person name="Muller S."/>
            <person name="Hoffmann T."/>
            <person name="Santos H."/>
            <person name="Saum S.H."/>
            <person name="Bremer E."/>
            <person name="Muller V."/>
        </authorList>
    </citation>
    <scope>FUNCTION AS AN ACETYLTRANSFERASE</scope>
    <scope>CATALYTIC ACTIVITY</scope>
    <scope>BIOTECHNOLOGY</scope>
    <scope>DISRUPTION PHENOTYPE</scope>
    <source>
        <strain>168</strain>
    </source>
</reference>
<organism>
    <name type="scientific">Bacillus subtilis (strain 168)</name>
    <dbReference type="NCBI Taxonomy" id="224308"/>
    <lineage>
        <taxon>Bacteria</taxon>
        <taxon>Bacillati</taxon>
        <taxon>Bacillota</taxon>
        <taxon>Bacilli</taxon>
        <taxon>Bacillales</taxon>
        <taxon>Bacillaceae</taxon>
        <taxon>Bacillus</taxon>
    </lineage>
</organism>
<evidence type="ECO:0000255" key="1">
    <source>
        <dbReference type="PROSITE-ProRule" id="PRU00532"/>
    </source>
</evidence>
<evidence type="ECO:0000269" key="2">
    <source>
    </source>
</evidence>
<evidence type="ECO:0000269" key="3">
    <source>
    </source>
</evidence>
<evidence type="ECO:0000269" key="4">
    <source>
    </source>
</evidence>
<evidence type="ECO:0000305" key="5"/>
<evidence type="ECO:0000305" key="6">
    <source>
    </source>
</evidence>